<comment type="function">
    <text evidence="1 2">Component of the mechanistic target of rapamycin complex 2 (mTORC2), which transduces signals from growth factors to pathways involved in proliferation, cytoskeletal organization, lipogenesis and anabolic output (By similarity). In response to growth factors, mTORC2 phosphorylates and activates AGC protein kinase family members, including AKT (AKT1, AKT2 and AKT3), PKC (PRKCA, PRKCB and PRKCE) and SGK1 (By similarity). In contrast to mTORC1, mTORC2 is nutrient-insensitive (By similarity). Within the mTORC2 complex, MAPKAP1/SIN1 acts as a substrate adapter which recognizes and binds AGC protein kinase family members for phosphorylation by MTOR (By similarity). mTORC2 plays a critical role in AKT1 activation by mediating phosphorylation of different sites depending on the context, such as 'Thr-450', 'Ser-473', 'Ser-477' or 'Thr-479', facilitating the phosphorylation of the activation loop of AKT1 on 'Thr-308' by PDPK1/PDK1 which is a prerequisite for full activation (By similarity). mTORC2 catalyzes the phosphorylation of SGK1 at 'Ser-422' and of PRKCA on 'Ser-657' (By similarity). The mTORC2 complex also phosphorylates various proteins involved in insulin signaling, such as FBXW8 and IGF2BP1 (By similarity). mTORC2 acts upstream of Rho GTPases to regulate the actin cytoskeleton, probably by activating one or more Rho-type guanine nucleotide exchange factors (By similarity). mTORC2 promotes the serum-induced formation of stress-fibers or F-actin (By similarity). MAPKAP1 inhibits MAP3K2 by preventing its dimerization and autophosphorylation (By similarity). Inhibits HRAS and KRAS independently of mTORC2 complex (By similarity). Enhances osmotic stress-induced phosphorylation of ATF2 and ATF2-mediated transcription (By similarity). Involved in ciliogenesis, regulates cilia length through its interaction with CCDC28B independently of mTORC2 complex (By similarity).</text>
</comment>
<comment type="activity regulation">
    <text evidence="2">Phosphatidylinositol 3,4,5-trisphosphate (PI(3,4,5)P3) promotes MTOR activation by relieving MAPKAP1/SIN1-mediated inhibition of MTOR that takes place in absence of PI(3,4,5)P3.</text>
</comment>
<comment type="subunit">
    <text evidence="2 4">Component of the mechanistic target of rapamycin complex 2 (mTORC2), consisting in two heterotretramers composed of MTOR, MLST8, RICTOR and MAPKAP1/SIN1. The mTORC2 core complex associates with PRR5/PROTOR1 and/or PRR5L/PROTOR2. Contrary to mTORC1, mTORC2 does not bind to and is not sensitive to FKBP12-rapamycin. Interacts with MAP3K2. Interacts with ATF2. Interacts with MAPK8. Interacts with GTP-bound HRAS and KRAS; inhibiting their activity (By similarity). Interacts with IFNAR2 (PubMed:15345682).</text>
</comment>
<comment type="subcellular location">
    <subcellularLocation>
        <location evidence="2">Cell membrane</location>
        <topology evidence="2">Peripheral membrane protein</topology>
    </subcellularLocation>
    <subcellularLocation>
        <location evidence="4">Cytoplasmic vesicle</location>
    </subcellularLocation>
    <subcellularLocation>
        <location evidence="2">Endoplasmic reticulum membrane</location>
        <topology evidence="2">Peripheral membrane protein</topology>
    </subcellularLocation>
    <subcellularLocation>
        <location evidence="2">Early endosome membrane</location>
        <topology evidence="2">Peripheral membrane protein</topology>
    </subcellularLocation>
    <subcellularLocation>
        <location evidence="2">Late endosome membrane</location>
        <topology evidence="2">Peripheral membrane protein</topology>
    </subcellularLocation>
    <subcellularLocation>
        <location evidence="2">Lysosome membrane</location>
        <topology evidence="2">Peripheral membrane protein</topology>
    </subcellularLocation>
    <subcellularLocation>
        <location evidence="2">Golgi apparatus membrane</location>
        <topology evidence="2">Peripheral membrane protein</topology>
    </subcellularLocation>
    <subcellularLocation>
        <location evidence="2">Mitochondrion outer membrane</location>
        <topology evidence="2">Peripheral membrane protein</topology>
    </subcellularLocation>
    <subcellularLocation>
        <location evidence="1">Cytoplasm</location>
        <location evidence="1">Perinuclear region</location>
    </subcellularLocation>
    <subcellularLocation>
        <location evidence="2">Nucleus</location>
    </subcellularLocation>
    <text evidence="1 2">The mTORC2 complex localizes to membranes: mTORC2 is active at the plasma membrane, endoplasmic reticulum membrane, lysosomes and perinuclear region. Iin lysosomal membrane, mTORC2 is sensitive to lysosomal positioning in the cell (By similarity). Following phosphorylation by PKC, localizes to the perinuclear region, where the mTORC2 complexe specifically phosphorylates SGK1, but not AKT (By similarity).</text>
</comment>
<comment type="tissue specificity">
    <text evidence="4">Present in the lumenal epithelium and glandular epithelium of endometrium (at protein level).</text>
</comment>
<comment type="domain">
    <text evidence="2">The CRIM domain forms a ubiquitin-like fold with a characteristic acidic loop, which recognizes and binds AGC protein kinase family members substrates.</text>
</comment>
<comment type="domain">
    <text evidence="2">The SIN1-type PH binds phosphatidylinositol 3,4,5-trisphosphate (PI(3,4,5)P3). It plays a dual role in mTORC2: in absence of PI(3,4,5)P3, it binds and inactivates MTOR. PI(3,4,5)P3-binding relieves the inhibition, leading to mTORC2 activation.</text>
</comment>
<comment type="PTM">
    <text evidence="1">Phosphorylation at Ser-128 by PKC promotes relocalization to the perinuclear region, where the mTORC2 complex specifically mediates phosphorylation of SGK1. Phosphorylated at Thr-86 by AKT1 or RPS6KB1 in the presence of growth factors; the effect of this phosphorylation is however unclear. According to two studies, phosphorylation at Thr-86 by AKT1 is part of a positive feedback loop that increases mTORC2 activation. According to another study, phosphorylation at Thr-86 and Thr-398 by RPS6KB1 promotes dissociation from the mTORC2 complex, leading to inhibit mTORC2 signaling.</text>
</comment>
<comment type="similarity">
    <text evidence="5">Belongs to the SIN1 family.</text>
</comment>
<name>SIN1_SHEEP</name>
<reference key="1">
    <citation type="journal article" date="2004" name="Endocrinology">
        <title>Interaction of stress-activated protein kinase-interacting protein-1 with the interferon receptor subunit IFNAR2 in uterine endometrium.</title>
        <authorList>
            <person name="Wang S.-Z."/>
            <person name="Roberts R.M."/>
        </authorList>
    </citation>
    <scope>NUCLEOTIDE SEQUENCE [MRNA]</scope>
    <scope>TISSUE SPECIFICITY</scope>
    <scope>INTERACTION WITH IFNAR2</scope>
    <scope>SUBCELLULAR LOCATION</scope>
</reference>
<proteinExistence type="evidence at protein level"/>
<sequence length="522" mass="59175">MGFLDNPTIILAHIRQSHVTSDDTGMCEVVLIDHDVDLEKIHPPSMPGDSGSEIQGSNGETQGYVYAQSVDITSSWDFGIRRRSNTAQRLERLRKERQNQIKCKNIQWKERNSKQSAQELKSLFEKKSLKEKPPNSGKQSILSVRLEQCPLQLNNPFNEYSKFDGKGHVGTTATKKIDVYLPLHSSQDRLLPMTVVTMASARVQDLIGLICWQYTSEGREPKLNDNVSAYCLHIAEDDGEVDTDFPPLDSNEPIHKFGFSTLALVEKYSSPGLTSKESLFVRINAAHGFSLIQVDNTKVTMKEILLKAVKRRKGSQKISGPQYRLEKQRQPNVAVDLESTLESQSAWEFCLVRENSSRADGVFEEDSQIDIATVQDMLSSHHYKSFKVSMIHRLRFTTELQLGISGDKVEIDPVTSQKASTKFWIKQKPISIDSDLLCACDLAEEKSPSHAIFKLTYLSNHDYKHLYFESDAATVNEIVLKVNYILESRASTARADYFAQKQRKLNRRTSFSFQKEKKSGQQ</sequence>
<evidence type="ECO:0000250" key="1">
    <source>
        <dbReference type="UniProtKB" id="Q8BKH7"/>
    </source>
</evidence>
<evidence type="ECO:0000250" key="2">
    <source>
        <dbReference type="UniProtKB" id="Q9BPZ7"/>
    </source>
</evidence>
<evidence type="ECO:0000255" key="3"/>
<evidence type="ECO:0000269" key="4">
    <source>
    </source>
</evidence>
<evidence type="ECO:0000305" key="5"/>
<keyword id="KW-1003">Cell membrane</keyword>
<keyword id="KW-0963">Cytoplasm</keyword>
<keyword id="KW-0968">Cytoplasmic vesicle</keyword>
<keyword id="KW-0256">Endoplasmic reticulum</keyword>
<keyword id="KW-0967">Endosome</keyword>
<keyword id="KW-0333">Golgi apparatus</keyword>
<keyword id="KW-0458">Lysosome</keyword>
<keyword id="KW-0472">Membrane</keyword>
<keyword id="KW-0496">Mitochondrion</keyword>
<keyword id="KW-1000">Mitochondrion outer membrane</keyword>
<keyword id="KW-0539">Nucleus</keyword>
<keyword id="KW-0597">Phosphoprotein</keyword>
<keyword id="KW-1185">Reference proteome</keyword>
<gene>
    <name type="primary">MAPKAP1</name>
    <name type="synonym">SIN1</name>
</gene>
<organism>
    <name type="scientific">Ovis aries</name>
    <name type="common">Sheep</name>
    <dbReference type="NCBI Taxonomy" id="9940"/>
    <lineage>
        <taxon>Eukaryota</taxon>
        <taxon>Metazoa</taxon>
        <taxon>Chordata</taxon>
        <taxon>Craniata</taxon>
        <taxon>Vertebrata</taxon>
        <taxon>Euteleostomi</taxon>
        <taxon>Mammalia</taxon>
        <taxon>Eutheria</taxon>
        <taxon>Laurasiatheria</taxon>
        <taxon>Artiodactyla</taxon>
        <taxon>Ruminantia</taxon>
        <taxon>Pecora</taxon>
        <taxon>Bovidae</taxon>
        <taxon>Caprinae</taxon>
        <taxon>Ovis</taxon>
    </lineage>
</organism>
<dbReference type="EMBL" id="AY547378">
    <property type="protein sequence ID" value="AAS55637.1"/>
    <property type="molecule type" value="mRNA"/>
</dbReference>
<dbReference type="RefSeq" id="NP_001009768.1">
    <property type="nucleotide sequence ID" value="NM_001009768.1"/>
</dbReference>
<dbReference type="SMR" id="Q6QD73"/>
<dbReference type="STRING" id="9940.ENSOARP00000013645"/>
<dbReference type="PaxDb" id="9940-ENSOARP00000013645"/>
<dbReference type="GeneID" id="443294"/>
<dbReference type="KEGG" id="oas:443294"/>
<dbReference type="CTD" id="79109"/>
<dbReference type="eggNOG" id="KOG3739">
    <property type="taxonomic scope" value="Eukaryota"/>
</dbReference>
<dbReference type="OrthoDB" id="241990at2759"/>
<dbReference type="Proteomes" id="UP000002356">
    <property type="component" value="Unplaced"/>
</dbReference>
<dbReference type="GO" id="GO:0005769">
    <property type="term" value="C:early endosome"/>
    <property type="evidence" value="ECO:0000250"/>
    <property type="project" value="UniProtKB"/>
</dbReference>
<dbReference type="GO" id="GO:0031901">
    <property type="term" value="C:early endosome membrane"/>
    <property type="evidence" value="ECO:0007669"/>
    <property type="project" value="UniProtKB-SubCell"/>
</dbReference>
<dbReference type="GO" id="GO:0005783">
    <property type="term" value="C:endoplasmic reticulum"/>
    <property type="evidence" value="ECO:0000250"/>
    <property type="project" value="UniProtKB"/>
</dbReference>
<dbReference type="GO" id="GO:0005789">
    <property type="term" value="C:endoplasmic reticulum membrane"/>
    <property type="evidence" value="ECO:0007669"/>
    <property type="project" value="UniProtKB-SubCell"/>
</dbReference>
<dbReference type="GO" id="GO:0000139">
    <property type="term" value="C:Golgi membrane"/>
    <property type="evidence" value="ECO:0007669"/>
    <property type="project" value="UniProtKB-SubCell"/>
</dbReference>
<dbReference type="GO" id="GO:0005770">
    <property type="term" value="C:late endosome"/>
    <property type="evidence" value="ECO:0000250"/>
    <property type="project" value="UniProtKB"/>
</dbReference>
<dbReference type="GO" id="GO:0031902">
    <property type="term" value="C:late endosome membrane"/>
    <property type="evidence" value="ECO:0007669"/>
    <property type="project" value="UniProtKB-SubCell"/>
</dbReference>
<dbReference type="GO" id="GO:0005765">
    <property type="term" value="C:lysosomal membrane"/>
    <property type="evidence" value="ECO:0007669"/>
    <property type="project" value="UniProtKB-SubCell"/>
</dbReference>
<dbReference type="GO" id="GO:0005764">
    <property type="term" value="C:lysosome"/>
    <property type="evidence" value="ECO:0000250"/>
    <property type="project" value="UniProtKB"/>
</dbReference>
<dbReference type="GO" id="GO:0005741">
    <property type="term" value="C:mitochondrial outer membrane"/>
    <property type="evidence" value="ECO:0000250"/>
    <property type="project" value="UniProtKB"/>
</dbReference>
<dbReference type="GO" id="GO:0005634">
    <property type="term" value="C:nucleus"/>
    <property type="evidence" value="ECO:0007669"/>
    <property type="project" value="UniProtKB-SubCell"/>
</dbReference>
<dbReference type="GO" id="GO:0048471">
    <property type="term" value="C:perinuclear region of cytoplasm"/>
    <property type="evidence" value="ECO:0007669"/>
    <property type="project" value="UniProtKB-SubCell"/>
</dbReference>
<dbReference type="GO" id="GO:0005886">
    <property type="term" value="C:plasma membrane"/>
    <property type="evidence" value="ECO:0007669"/>
    <property type="project" value="UniProtKB-SubCell"/>
</dbReference>
<dbReference type="GO" id="GO:0031932">
    <property type="term" value="C:TORC2 complex"/>
    <property type="evidence" value="ECO:0000250"/>
    <property type="project" value="UniProtKB"/>
</dbReference>
<dbReference type="GO" id="GO:0140767">
    <property type="term" value="F:enzyme-substrate adaptor activity"/>
    <property type="evidence" value="ECO:0000250"/>
    <property type="project" value="UniProtKB"/>
</dbReference>
<dbReference type="GO" id="GO:0005547">
    <property type="term" value="F:phosphatidylinositol-3,4,5-trisphosphate binding"/>
    <property type="evidence" value="ECO:0000250"/>
    <property type="project" value="UniProtKB"/>
</dbReference>
<dbReference type="GO" id="GO:0005546">
    <property type="term" value="F:phosphatidylinositol-4,5-bisphosphate binding"/>
    <property type="evidence" value="ECO:0007669"/>
    <property type="project" value="TreeGrafter"/>
</dbReference>
<dbReference type="GO" id="GO:0032869">
    <property type="term" value="P:cellular response to insulin stimulus"/>
    <property type="evidence" value="ECO:0000250"/>
    <property type="project" value="UniProtKB"/>
</dbReference>
<dbReference type="GO" id="GO:0038203">
    <property type="term" value="P:TORC2 signaling"/>
    <property type="evidence" value="ECO:0000250"/>
    <property type="project" value="UniProtKB"/>
</dbReference>
<dbReference type="CDD" id="cd13331">
    <property type="entry name" value="PH_Avo1"/>
    <property type="match status" value="1"/>
</dbReference>
<dbReference type="FunFam" id="2.30.29.30:FF:000585">
    <property type="entry name" value="target of rapamycin complex 2 subunit MAPKAP1 isoform X3"/>
    <property type="match status" value="1"/>
</dbReference>
<dbReference type="Gene3D" id="2.30.29.30">
    <property type="entry name" value="Pleckstrin-homology domain (PH domain)/Phosphotyrosine-binding domain (PTB)"/>
    <property type="match status" value="1"/>
</dbReference>
<dbReference type="InterPro" id="IPR031567">
    <property type="entry name" value="CRIM_dom"/>
</dbReference>
<dbReference type="InterPro" id="IPR011993">
    <property type="entry name" value="PH-like_dom_sf"/>
</dbReference>
<dbReference type="InterPro" id="IPR008828">
    <property type="entry name" value="Sin1/Avo1"/>
</dbReference>
<dbReference type="InterPro" id="IPR032679">
    <property type="entry name" value="Sin1_N"/>
</dbReference>
<dbReference type="InterPro" id="IPR031313">
    <property type="entry name" value="Sin1_PH_dom"/>
</dbReference>
<dbReference type="PANTHER" id="PTHR13335">
    <property type="entry name" value="TARGET OF RAPAMYCIN COMPLEX 2 SUBUNIT MAPKAP1"/>
    <property type="match status" value="1"/>
</dbReference>
<dbReference type="PANTHER" id="PTHR13335:SF1">
    <property type="entry name" value="TARGET OF RAPAMYCIN COMPLEX 2 SUBUNIT MAPKAP1"/>
    <property type="match status" value="1"/>
</dbReference>
<dbReference type="Pfam" id="PF16978">
    <property type="entry name" value="CRIM"/>
    <property type="match status" value="1"/>
</dbReference>
<dbReference type="Pfam" id="PF05422">
    <property type="entry name" value="SIN1"/>
    <property type="match status" value="1"/>
</dbReference>
<dbReference type="Pfam" id="PF16979">
    <property type="entry name" value="SIN1_PH"/>
    <property type="match status" value="1"/>
</dbReference>
<feature type="chain" id="PRO_0000328034" description="Target of rapamycin complex 2 subunit MAPKAP1">
    <location>
        <begin position="1"/>
        <end position="522"/>
    </location>
</feature>
<feature type="domain" description="CRIM" evidence="3">
    <location>
        <begin position="139"/>
        <end position="267"/>
    </location>
</feature>
<feature type="domain" description="SIN1-type PH" evidence="3">
    <location>
        <begin position="382"/>
        <end position="487"/>
    </location>
</feature>
<feature type="region of interest" description="Interaction with NBN" evidence="2">
    <location>
        <begin position="2"/>
        <end position="267"/>
    </location>
</feature>
<feature type="region of interest" description="Interaction with MAP3K2" evidence="2">
    <location>
        <begin position="2"/>
        <end position="184"/>
    </location>
</feature>
<feature type="region of interest" description="SIN1-type RBD" evidence="3">
    <location>
        <begin position="279"/>
        <end position="353"/>
    </location>
</feature>
<feature type="region of interest" description="Interaction with ATF2" evidence="2">
    <location>
        <begin position="468"/>
        <end position="522"/>
    </location>
</feature>
<feature type="binding site" evidence="2">
    <location>
        <position position="393"/>
    </location>
    <ligand>
        <name>a 1,2-diacyl-sn-glycero-3-phospho-(1D-myo-inositol-3,4,5-trisphosphate)</name>
        <dbReference type="ChEBI" id="CHEBI:57836"/>
    </ligand>
</feature>
<feature type="binding site" evidence="2">
    <location>
        <position position="428"/>
    </location>
    <ligand>
        <name>a 1,2-diacyl-sn-glycero-3-phospho-(1D-myo-inositol-3,4,5-trisphosphate)</name>
        <dbReference type="ChEBI" id="CHEBI:57836"/>
    </ligand>
</feature>
<feature type="binding site" evidence="2">
    <location>
        <position position="464"/>
    </location>
    <ligand>
        <name>a 1,2-diacyl-sn-glycero-3-phospho-(1D-myo-inositol-3,4,5-trisphosphate)</name>
        <dbReference type="ChEBI" id="CHEBI:57836"/>
    </ligand>
</feature>
<feature type="modified residue" description="Phosphothreonine" evidence="2">
    <location>
        <position position="86"/>
    </location>
</feature>
<feature type="modified residue" description="Phosphoserine" evidence="2">
    <location>
        <position position="128"/>
    </location>
</feature>
<feature type="modified residue" description="Phosphoserine" evidence="2">
    <location>
        <position position="186"/>
    </location>
</feature>
<feature type="modified residue" description="Phosphoserine" evidence="2">
    <location>
        <position position="315"/>
    </location>
</feature>
<feature type="modified residue" description="Phosphoserine" evidence="2">
    <location>
        <position position="356"/>
    </location>
</feature>
<feature type="modified residue" description="Phosphothreonine" evidence="1">
    <location>
        <position position="398"/>
    </location>
</feature>
<feature type="modified residue" description="Phosphoserine" evidence="2">
    <location>
        <position position="510"/>
    </location>
</feature>
<protein>
    <recommendedName>
        <fullName>Target of rapamycin complex 2 subunit MAPKAP1</fullName>
        <shortName>TORC2 subunit MAPKAP1</shortName>
    </recommendedName>
    <alternativeName>
        <fullName>Mitogen-activated protein kinase 2-associated protein 1</fullName>
    </alternativeName>
    <alternativeName>
        <fullName>Stress-activated map kinase-interacting protein 1</fullName>
        <shortName>SAPK-interacting protein 1</shortName>
    </alternativeName>
</protein>
<accession>Q6QD73</accession>